<organism>
    <name type="scientific">Photobacterium profundum (strain SS9)</name>
    <dbReference type="NCBI Taxonomy" id="298386"/>
    <lineage>
        <taxon>Bacteria</taxon>
        <taxon>Pseudomonadati</taxon>
        <taxon>Pseudomonadota</taxon>
        <taxon>Gammaproteobacteria</taxon>
        <taxon>Vibrionales</taxon>
        <taxon>Vibrionaceae</taxon>
        <taxon>Photobacterium</taxon>
    </lineage>
</organism>
<name>Y2971_PHOPR</name>
<evidence type="ECO:0000255" key="1">
    <source>
        <dbReference type="HAMAP-Rule" id="MF_01519"/>
    </source>
</evidence>
<gene>
    <name type="ordered locus">PBPRA2971</name>
</gene>
<protein>
    <recommendedName>
        <fullName evidence="1">UPF0325 protein PBPRA2971</fullName>
    </recommendedName>
</protein>
<keyword id="KW-1185">Reference proteome</keyword>
<sequence>MYPHLTSIGIEQPEAIERYSLRQEAANDILKVYFAKNKGELFAKSVKFKFPRQRKSVLVNSGSREYKEITEINRTLTHIIDELDIITKRKHTEVDIKKKILGDLRHLERVVSHKISEIEADLEKLK</sequence>
<reference key="1">
    <citation type="journal article" date="2005" name="Science">
        <title>Life at depth: Photobacterium profundum genome sequence and expression analysis.</title>
        <authorList>
            <person name="Vezzi A."/>
            <person name="Campanaro S."/>
            <person name="D'Angelo M."/>
            <person name="Simonato F."/>
            <person name="Vitulo N."/>
            <person name="Lauro F.M."/>
            <person name="Cestaro A."/>
            <person name="Malacrida G."/>
            <person name="Simionati B."/>
            <person name="Cannata N."/>
            <person name="Romualdi C."/>
            <person name="Bartlett D.H."/>
            <person name="Valle G."/>
        </authorList>
    </citation>
    <scope>NUCLEOTIDE SEQUENCE [LARGE SCALE GENOMIC DNA]</scope>
    <source>
        <strain>ATCC BAA-1253 / SS9</strain>
    </source>
</reference>
<comment type="similarity">
    <text evidence="1">Belongs to the UPF0325 family.</text>
</comment>
<dbReference type="EMBL" id="CR378672">
    <property type="protein sequence ID" value="CAG21305.1"/>
    <property type="molecule type" value="Genomic_DNA"/>
</dbReference>
<dbReference type="RefSeq" id="WP_011219572.1">
    <property type="nucleotide sequence ID" value="NC_006370.1"/>
</dbReference>
<dbReference type="SMR" id="Q6LN21"/>
<dbReference type="STRING" id="298386.PBPRA2971"/>
<dbReference type="KEGG" id="ppr:PBPRA2971"/>
<dbReference type="eggNOG" id="ENOG502ZBV4">
    <property type="taxonomic scope" value="Bacteria"/>
</dbReference>
<dbReference type="HOGENOM" id="CLU_136774_0_0_6"/>
<dbReference type="Proteomes" id="UP000000593">
    <property type="component" value="Chromosome 1"/>
</dbReference>
<dbReference type="HAMAP" id="MF_01519">
    <property type="entry name" value="UPF0325"/>
    <property type="match status" value="1"/>
</dbReference>
<dbReference type="InterPro" id="IPR020911">
    <property type="entry name" value="UPF0325"/>
</dbReference>
<dbReference type="NCBIfam" id="NF010213">
    <property type="entry name" value="PRK13677.1"/>
    <property type="match status" value="1"/>
</dbReference>
<dbReference type="Pfam" id="PF11944">
    <property type="entry name" value="DUF3461"/>
    <property type="match status" value="1"/>
</dbReference>
<accession>Q6LN21</accession>
<feature type="chain" id="PRO_0000211840" description="UPF0325 protein PBPRA2971">
    <location>
        <begin position="1"/>
        <end position="126"/>
    </location>
</feature>
<proteinExistence type="inferred from homology"/>